<reference key="1">
    <citation type="journal article" date="2007" name="Proc. Natl. Acad. Sci. U.S.A.">
        <title>Genome plasticity of BCG and impact on vaccine efficacy.</title>
        <authorList>
            <person name="Brosch R."/>
            <person name="Gordon S.V."/>
            <person name="Garnier T."/>
            <person name="Eiglmeier K."/>
            <person name="Frigui W."/>
            <person name="Valenti P."/>
            <person name="Dos Santos S."/>
            <person name="Duthoy S."/>
            <person name="Lacroix C."/>
            <person name="Garcia-Pelayo C."/>
            <person name="Inwald J.K."/>
            <person name="Golby P."/>
            <person name="Garcia J.N."/>
            <person name="Hewinson R.G."/>
            <person name="Behr M.A."/>
            <person name="Quail M.A."/>
            <person name="Churcher C."/>
            <person name="Barrell B.G."/>
            <person name="Parkhill J."/>
            <person name="Cole S.T."/>
        </authorList>
    </citation>
    <scope>NUCLEOTIDE SEQUENCE [LARGE SCALE GENOMIC DNA]</scope>
    <source>
        <strain>BCG / Pasteur 1173P2</strain>
    </source>
</reference>
<evidence type="ECO:0000255" key="1">
    <source>
        <dbReference type="HAMAP-Rule" id="MF_00154"/>
    </source>
</evidence>
<sequence>MNVRGRVAPRRVTGRAMSTLLAYLALTKPRVIELLLVTAIPAMLLADRGAIHPLLMLNTLVGGMMAATGANTLNCVADADIDKVMKRTARRPLAREAVPTRNALALGLTLTVISFFWLWCATNLLAGVLALVTVAFYVFVYTLWLKRRTSQNVVWGGAAGCMPVMIGWSAITGTIAWPALAMFAIIFFWTPPHTWALAMRYKQDYQVAGVPMLPAVATERQVTKQILIYTWLTVAATLVLALATSWLYGAVALVAGGWFLTMAHQLYAGVRAGEPVRPLRLFLQSNNYLAVVFCALAVDSVIALPTLH</sequence>
<feature type="chain" id="PRO_0000327083" description="Protoheme IX farnesyltransferase">
    <location>
        <begin position="1"/>
        <end position="308"/>
    </location>
</feature>
<feature type="transmembrane region" description="Helical" evidence="1">
    <location>
        <begin position="20"/>
        <end position="40"/>
    </location>
</feature>
<feature type="transmembrane region" description="Helical" evidence="1">
    <location>
        <begin position="50"/>
        <end position="70"/>
    </location>
</feature>
<feature type="transmembrane region" description="Helical" evidence="1">
    <location>
        <begin position="102"/>
        <end position="122"/>
    </location>
</feature>
<feature type="transmembrane region" description="Helical" evidence="1">
    <location>
        <begin position="124"/>
        <end position="144"/>
    </location>
</feature>
<feature type="transmembrane region" description="Helical" evidence="1">
    <location>
        <begin position="149"/>
        <end position="169"/>
    </location>
</feature>
<feature type="transmembrane region" description="Helical" evidence="1">
    <location>
        <begin position="170"/>
        <end position="190"/>
    </location>
</feature>
<feature type="transmembrane region" description="Helical" evidence="1">
    <location>
        <begin position="227"/>
        <end position="249"/>
    </location>
</feature>
<feature type="transmembrane region" description="Helical" evidence="1">
    <location>
        <begin position="288"/>
        <end position="308"/>
    </location>
</feature>
<organism>
    <name type="scientific">Mycobacterium bovis (strain BCG / Pasteur 1173P2)</name>
    <dbReference type="NCBI Taxonomy" id="410289"/>
    <lineage>
        <taxon>Bacteria</taxon>
        <taxon>Bacillati</taxon>
        <taxon>Actinomycetota</taxon>
        <taxon>Actinomycetes</taxon>
        <taxon>Mycobacteriales</taxon>
        <taxon>Mycobacteriaceae</taxon>
        <taxon>Mycobacterium</taxon>
        <taxon>Mycobacterium tuberculosis complex</taxon>
    </lineage>
</organism>
<comment type="function">
    <text evidence="1">Converts heme B (protoheme IX) to heme O by substitution of the vinyl group on carbon 2 of heme B porphyrin ring with a hydroxyethyl farnesyl side group.</text>
</comment>
<comment type="catalytic activity">
    <reaction evidence="1">
        <text>heme b + (2E,6E)-farnesyl diphosphate + H2O = Fe(II)-heme o + diphosphate</text>
        <dbReference type="Rhea" id="RHEA:28070"/>
        <dbReference type="ChEBI" id="CHEBI:15377"/>
        <dbReference type="ChEBI" id="CHEBI:33019"/>
        <dbReference type="ChEBI" id="CHEBI:60344"/>
        <dbReference type="ChEBI" id="CHEBI:60530"/>
        <dbReference type="ChEBI" id="CHEBI:175763"/>
        <dbReference type="EC" id="2.5.1.141"/>
    </reaction>
</comment>
<comment type="pathway">
    <text evidence="1">Porphyrin-containing compound metabolism; heme O biosynthesis; heme O from protoheme: step 1/1.</text>
</comment>
<comment type="subcellular location">
    <subcellularLocation>
        <location evidence="1">Cell membrane</location>
        <topology evidence="1">Multi-pass membrane protein</topology>
    </subcellularLocation>
</comment>
<comment type="miscellaneous">
    <text evidence="1">Carbon 2 of the heme B porphyrin ring is defined according to the Fischer nomenclature.</text>
</comment>
<comment type="similarity">
    <text evidence="1">Belongs to the UbiA prenyltransferase family. Protoheme IX farnesyltransferase subfamily.</text>
</comment>
<protein>
    <recommendedName>
        <fullName evidence="1">Protoheme IX farnesyltransferase</fullName>
        <ecNumber evidence="1">2.5.1.141</ecNumber>
    </recommendedName>
    <alternativeName>
        <fullName evidence="1">Heme B farnesyltransferase</fullName>
    </alternativeName>
    <alternativeName>
        <fullName evidence="1">Heme O synthase</fullName>
    </alternativeName>
</protein>
<name>COXX_MYCBP</name>
<keyword id="KW-1003">Cell membrane</keyword>
<keyword id="KW-0350">Heme biosynthesis</keyword>
<keyword id="KW-0472">Membrane</keyword>
<keyword id="KW-0808">Transferase</keyword>
<keyword id="KW-0812">Transmembrane</keyword>
<keyword id="KW-1133">Transmembrane helix</keyword>
<accession>A1KIP0</accession>
<gene>
    <name evidence="1" type="primary">ctaB</name>
    <name type="ordered locus">BCG_1512</name>
</gene>
<dbReference type="EC" id="2.5.1.141" evidence="1"/>
<dbReference type="EMBL" id="AM408590">
    <property type="protein sequence ID" value="CAL71499.1"/>
    <property type="molecule type" value="Genomic_DNA"/>
</dbReference>
<dbReference type="RefSeq" id="WP_003422137.1">
    <property type="nucleotide sequence ID" value="NC_008769.1"/>
</dbReference>
<dbReference type="SMR" id="A1KIP0"/>
<dbReference type="KEGG" id="mbb:BCG_1512"/>
<dbReference type="HOGENOM" id="CLU_029631_0_1_11"/>
<dbReference type="UniPathway" id="UPA00834">
    <property type="reaction ID" value="UER00712"/>
</dbReference>
<dbReference type="Proteomes" id="UP000001472">
    <property type="component" value="Chromosome"/>
</dbReference>
<dbReference type="GO" id="GO:0005886">
    <property type="term" value="C:plasma membrane"/>
    <property type="evidence" value="ECO:0007669"/>
    <property type="project" value="UniProtKB-SubCell"/>
</dbReference>
<dbReference type="GO" id="GO:0008495">
    <property type="term" value="F:protoheme IX farnesyltransferase activity"/>
    <property type="evidence" value="ECO:0007669"/>
    <property type="project" value="UniProtKB-UniRule"/>
</dbReference>
<dbReference type="GO" id="GO:0048034">
    <property type="term" value="P:heme O biosynthetic process"/>
    <property type="evidence" value="ECO:0007669"/>
    <property type="project" value="UniProtKB-UniRule"/>
</dbReference>
<dbReference type="CDD" id="cd13957">
    <property type="entry name" value="PT_UbiA_Cox10"/>
    <property type="match status" value="1"/>
</dbReference>
<dbReference type="FunFam" id="1.10.357.140:FF:000001">
    <property type="entry name" value="Protoheme IX farnesyltransferase"/>
    <property type="match status" value="1"/>
</dbReference>
<dbReference type="Gene3D" id="1.10.357.140">
    <property type="entry name" value="UbiA prenyltransferase"/>
    <property type="match status" value="1"/>
</dbReference>
<dbReference type="HAMAP" id="MF_00154">
    <property type="entry name" value="CyoE_CtaB"/>
    <property type="match status" value="1"/>
</dbReference>
<dbReference type="InterPro" id="IPR006369">
    <property type="entry name" value="Protohaem_IX_farnesylTrfase"/>
</dbReference>
<dbReference type="InterPro" id="IPR000537">
    <property type="entry name" value="UbiA_prenyltransferase"/>
</dbReference>
<dbReference type="InterPro" id="IPR044878">
    <property type="entry name" value="UbiA_sf"/>
</dbReference>
<dbReference type="NCBIfam" id="TIGR01473">
    <property type="entry name" value="cyoE_ctaB"/>
    <property type="match status" value="1"/>
</dbReference>
<dbReference type="NCBIfam" id="NF003349">
    <property type="entry name" value="PRK04375.1-2"/>
    <property type="match status" value="1"/>
</dbReference>
<dbReference type="PANTHER" id="PTHR43448:SF7">
    <property type="entry name" value="4-HYDROXYBENZOATE SOLANESYLTRANSFERASE"/>
    <property type="match status" value="1"/>
</dbReference>
<dbReference type="PANTHER" id="PTHR43448">
    <property type="entry name" value="PROTOHEME IX FARNESYLTRANSFERASE, MITOCHONDRIAL"/>
    <property type="match status" value="1"/>
</dbReference>
<dbReference type="Pfam" id="PF01040">
    <property type="entry name" value="UbiA"/>
    <property type="match status" value="1"/>
</dbReference>
<proteinExistence type="inferred from homology"/>